<name>TARD_STAA8</name>
<proteinExistence type="evidence at protein level"/>
<gene>
    <name evidence="4" type="primary">tarD</name>
    <name evidence="7" type="ordered locus">SAOUHSC_00645</name>
</gene>
<dbReference type="EC" id="2.7.7.39" evidence="2"/>
<dbReference type="EMBL" id="CP000253">
    <property type="protein sequence ID" value="ABD29780.1"/>
    <property type="molecule type" value="Genomic_DNA"/>
</dbReference>
<dbReference type="RefSeq" id="YP_499205.1">
    <property type="nucleotide sequence ID" value="NC_007795.1"/>
</dbReference>
<dbReference type="PDB" id="2B7L">
    <property type="method" value="X-ray"/>
    <property type="resolution" value="3.00 A"/>
    <property type="chains" value="A/B/C/D=1-132"/>
</dbReference>
<dbReference type="PDBsum" id="2B7L"/>
<dbReference type="SMR" id="Q2G2X2"/>
<dbReference type="STRING" id="93061.SAOUHSC_00645"/>
<dbReference type="PaxDb" id="1280-SAXN108_0709"/>
<dbReference type="GeneID" id="3919937"/>
<dbReference type="KEGG" id="sao:SAOUHSC_00645"/>
<dbReference type="eggNOG" id="COG0615">
    <property type="taxonomic scope" value="Bacteria"/>
</dbReference>
<dbReference type="HOGENOM" id="CLU_034585_2_2_9"/>
<dbReference type="OrthoDB" id="9802794at2"/>
<dbReference type="UniPathway" id="UPA00790"/>
<dbReference type="Proteomes" id="UP000008816">
    <property type="component" value="Chromosome"/>
</dbReference>
<dbReference type="GO" id="GO:0005737">
    <property type="term" value="C:cytoplasm"/>
    <property type="evidence" value="ECO:0007669"/>
    <property type="project" value="UniProtKB-SubCell"/>
</dbReference>
<dbReference type="GO" id="GO:0047348">
    <property type="term" value="F:glycerol-3-phosphate cytidylyltransferase activity"/>
    <property type="evidence" value="ECO:0007669"/>
    <property type="project" value="UniProtKB-EC"/>
</dbReference>
<dbReference type="GO" id="GO:0046872">
    <property type="term" value="F:metal ion binding"/>
    <property type="evidence" value="ECO:0007669"/>
    <property type="project" value="InterPro"/>
</dbReference>
<dbReference type="GO" id="GO:0071555">
    <property type="term" value="P:cell wall organization"/>
    <property type="evidence" value="ECO:0007669"/>
    <property type="project" value="UniProtKB-KW"/>
</dbReference>
<dbReference type="GO" id="GO:0019350">
    <property type="term" value="P:teichoic acid biosynthetic process"/>
    <property type="evidence" value="ECO:0007669"/>
    <property type="project" value="UniProtKB-KW"/>
</dbReference>
<dbReference type="Gene3D" id="3.40.50.620">
    <property type="entry name" value="HUPs"/>
    <property type="match status" value="1"/>
</dbReference>
<dbReference type="InterPro" id="IPR050385">
    <property type="entry name" value="Archaeal_FAD_synthase"/>
</dbReference>
<dbReference type="InterPro" id="IPR004821">
    <property type="entry name" value="Cyt_trans-like"/>
</dbReference>
<dbReference type="InterPro" id="IPR006409">
    <property type="entry name" value="G3P_cytidylTrfase"/>
</dbReference>
<dbReference type="InterPro" id="IPR014729">
    <property type="entry name" value="Rossmann-like_a/b/a_fold"/>
</dbReference>
<dbReference type="NCBIfam" id="TIGR00125">
    <property type="entry name" value="cyt_tran_rel"/>
    <property type="match status" value="1"/>
</dbReference>
<dbReference type="NCBIfam" id="TIGR01518">
    <property type="entry name" value="g3p_cytidyltrns"/>
    <property type="match status" value="1"/>
</dbReference>
<dbReference type="PANTHER" id="PTHR43793">
    <property type="entry name" value="FAD SYNTHASE"/>
    <property type="match status" value="1"/>
</dbReference>
<dbReference type="PANTHER" id="PTHR43793:SF1">
    <property type="entry name" value="FAD SYNTHASE"/>
    <property type="match status" value="1"/>
</dbReference>
<dbReference type="Pfam" id="PF01467">
    <property type="entry name" value="CTP_transf_like"/>
    <property type="match status" value="1"/>
</dbReference>
<dbReference type="SUPFAM" id="SSF52374">
    <property type="entry name" value="Nucleotidylyl transferase"/>
    <property type="match status" value="1"/>
</dbReference>
<accession>Q2G2X2</accession>
<keyword id="KW-0002">3D-structure</keyword>
<keyword id="KW-0961">Cell wall biogenesis/degradation</keyword>
<keyword id="KW-0963">Cytoplasm</keyword>
<keyword id="KW-0548">Nucleotidyltransferase</keyword>
<keyword id="KW-1185">Reference proteome</keyword>
<keyword id="KW-0777">Teichoic acid biosynthesis</keyword>
<keyword id="KW-0808">Transferase</keyword>
<feature type="chain" id="PRO_0000438714" description="Glycerol-3-phosphate cytidylyltransferase">
    <location>
        <begin position="1"/>
        <end position="132"/>
    </location>
</feature>
<feature type="binding site" evidence="1">
    <location>
        <begin position="9"/>
        <end position="10"/>
    </location>
    <ligand>
        <name>CTP</name>
        <dbReference type="ChEBI" id="CHEBI:37563"/>
    </ligand>
</feature>
<feature type="binding site" evidence="1">
    <location>
        <begin position="14"/>
        <end position="17"/>
    </location>
    <ligand>
        <name>CTP</name>
        <dbReference type="ChEBI" id="CHEBI:37563"/>
    </ligand>
</feature>
<feature type="binding site" evidence="1">
    <location>
        <position position="44"/>
    </location>
    <ligand>
        <name>substrate</name>
    </ligand>
</feature>
<feature type="binding site" evidence="1">
    <location>
        <position position="46"/>
    </location>
    <ligand>
        <name>CTP</name>
        <dbReference type="ChEBI" id="CHEBI:37563"/>
    </ligand>
</feature>
<feature type="binding site" evidence="1">
    <location>
        <position position="77"/>
    </location>
    <ligand>
        <name>substrate</name>
    </ligand>
</feature>
<feature type="binding site" evidence="1">
    <location>
        <begin position="113"/>
        <end position="120"/>
    </location>
    <ligand>
        <name>CTP</name>
        <dbReference type="ChEBI" id="CHEBI:37563"/>
    </ligand>
</feature>
<evidence type="ECO:0000250" key="1">
    <source>
        <dbReference type="UniProtKB" id="P27623"/>
    </source>
</evidence>
<evidence type="ECO:0000269" key="2">
    <source>
    </source>
</evidence>
<evidence type="ECO:0000269" key="3">
    <source>
    </source>
</evidence>
<evidence type="ECO:0000303" key="4">
    <source>
    </source>
</evidence>
<evidence type="ECO:0000305" key="5"/>
<evidence type="ECO:0000305" key="6">
    <source>
    </source>
</evidence>
<evidence type="ECO:0000312" key="7">
    <source>
        <dbReference type="EMBL" id="ABD29780.1"/>
    </source>
</evidence>
<evidence type="ECO:0000312" key="8">
    <source>
        <dbReference type="Proteomes" id="UP000008816"/>
    </source>
</evidence>
<reference key="1">
    <citation type="book" date="2006" name="Gram positive pathogens, 2nd edition">
        <title>The Staphylococcus aureus NCTC 8325 genome.</title>
        <editorList>
            <person name="Fischetti V."/>
            <person name="Novick R."/>
            <person name="Ferretti J."/>
            <person name="Portnoy D."/>
            <person name="Rood J."/>
        </editorList>
        <authorList>
            <person name="Gillaspy A.F."/>
            <person name="Worrell V."/>
            <person name="Orvis J."/>
            <person name="Roe B.A."/>
            <person name="Dyer D.W."/>
            <person name="Iandolo J.J."/>
        </authorList>
    </citation>
    <scope>NUCLEOTIDE SEQUENCE [LARGE SCALE GENOMIC DNA]</scope>
    <source>
        <strain evidence="8">NCTC 8325 / PS 47</strain>
    </source>
</reference>
<reference key="2">
    <citation type="journal article" date="2003" name="Biochim. Biophys. Acta">
        <title>CTP:glycerol 3-phosphate cytidylyltransferase (TarD) from Staphylococcus aureus catalyzes the cytidylyl transfer via an ordered Bi-Bi reaction mechanism with micromolar K(m) values.</title>
        <authorList>
            <person name="Badurina D.S."/>
            <person name="Zolli-Juran M."/>
            <person name="Brown E.D."/>
        </authorList>
    </citation>
    <scope>FUNCTION</scope>
    <scope>CATALYTIC ACTIVITY</scope>
    <scope>PATHWAY</scope>
    <scope>SUBUNIT</scope>
    <scope>BIOPHYSICOCHEMICAL PROPERTIES</scope>
    <scope>REACTION MECHANISM</scope>
    <scope>ENZYME KINETICS</scope>
</reference>
<reference key="3">
    <citation type="journal article" date="2006" name="Biochim. Biophys. Acta">
        <title>Crystal structure of CTP:glycerol-3-phosphate cytidylyltransferase from Staphylococcus aureus: examination of structural basis for kinetic mechanism.</title>
        <authorList>
            <person name="Fong D.H."/>
            <person name="Yim V.C.-N."/>
            <person name="D'Elia M.A."/>
            <person name="Brown E.D."/>
            <person name="Berghuis A.M."/>
        </authorList>
    </citation>
    <scope>X-RAY CRYSTALLOGRAPHY (3.00 ANGSTROMS)</scope>
    <scope>SUBUNIT</scope>
</reference>
<protein>
    <recommendedName>
        <fullName evidence="5">Glycerol-3-phosphate cytidylyltransferase</fullName>
        <shortName evidence="5">GCT</shortName>
        <shortName evidence="5">GCTase</shortName>
        <shortName evidence="5">Gro-PCT</shortName>
        <ecNumber evidence="2">2.7.7.39</ecNumber>
    </recommendedName>
    <alternativeName>
        <fullName evidence="5">CDP-glycerol pyrophosphorylase</fullName>
    </alternativeName>
</protein>
<organism>
    <name type="scientific">Staphylococcus aureus (strain NCTC 8325 / PS 47)</name>
    <dbReference type="NCBI Taxonomy" id="93061"/>
    <lineage>
        <taxon>Bacteria</taxon>
        <taxon>Bacillati</taxon>
        <taxon>Bacillota</taxon>
        <taxon>Bacilli</taxon>
        <taxon>Bacillales</taxon>
        <taxon>Staphylococcaceae</taxon>
        <taxon>Staphylococcus</taxon>
    </lineage>
</organism>
<comment type="function">
    <text evidence="2">Catalyzes the transfer of the cytidylyl group of CTP to sn-glycerol 3-phosphate so the activated glycerol 3-phosphate can be used for teichoic acid synthesis, via incorporation into both the linkage unit by TarB and TarF.</text>
</comment>
<comment type="catalytic activity">
    <reaction evidence="2">
        <text>sn-glycerol 3-phosphate + CTP + H(+) = CDP-glycerol + diphosphate</text>
        <dbReference type="Rhea" id="RHEA:13361"/>
        <dbReference type="ChEBI" id="CHEBI:15378"/>
        <dbReference type="ChEBI" id="CHEBI:33019"/>
        <dbReference type="ChEBI" id="CHEBI:37563"/>
        <dbReference type="ChEBI" id="CHEBI:57597"/>
        <dbReference type="ChEBI" id="CHEBI:58311"/>
        <dbReference type="EC" id="2.7.7.39"/>
    </reaction>
</comment>
<comment type="biophysicochemical properties">
    <kinetics>
        <KM evidence="2">36 uM for CTP</KM>
        <KM evidence="2">21 uM for glycerol 3-phosphate</KM>
        <text evidence="2">kcat is 2.6 sec(-1).</text>
    </kinetics>
</comment>
<comment type="pathway">
    <text evidence="6">Cell wall biogenesis; poly(ribitol phosphate) teichoic acid biosynthesis.</text>
</comment>
<comment type="subunit">
    <text evidence="2 3">Homotetramer or homodimer.</text>
</comment>
<comment type="subcellular location">
    <subcellularLocation>
        <location evidence="1">Cytoplasm</location>
    </subcellularLocation>
</comment>
<comment type="similarity">
    <text evidence="5">Belongs to the cytidylyltransferase family.</text>
</comment>
<sequence length="132" mass="15817">MKRVITYGTYDLLHYGHIELLRRAREMGDYLIVALSTDEFNQIKHKKSYYDYEQRKMMLESIRYVDLVIPEKGWGQKEDDVEKFDVDVFVMGHDWEGEFDFLKDKCEVIYLKRTEGISTTKIKQELYGKDAK</sequence>